<gene>
    <name evidence="1" type="primary">purE</name>
    <name type="ordered locus">PH0320</name>
    <name type="ORF">PHCD015</name>
</gene>
<evidence type="ECO:0000255" key="1">
    <source>
        <dbReference type="HAMAP-Rule" id="MF_01929"/>
    </source>
</evidence>
<keyword id="KW-0413">Isomerase</keyword>
<keyword id="KW-0658">Purine biosynthesis</keyword>
<accession>O58058</accession>
<protein>
    <recommendedName>
        <fullName evidence="1">N5-carboxyaminoimidazole ribonucleotide mutase</fullName>
        <shortName evidence="1">N5-CAIR mutase</shortName>
        <ecNumber evidence="1">5.4.99.18</ecNumber>
    </recommendedName>
    <alternativeName>
        <fullName evidence="1">5-(carboxyamino)imidazole ribonucleotide mutase</fullName>
    </alternativeName>
</protein>
<sequence>MVISMKSEKPLVGIIMGSDSDLPVMKEAARILEEFGVPYEITIISAHRTPERAYEYAKKAEERGIEVIIAGAGGAAHLPGIIASLTVLPVIGVPIKSKALNGLDSLLSIVQMPSGIPVATVAIDNAKNAALLALRILGIKYPEIKEKLRRYMKDMKRKVEEKAKRLEEMGWERYLSE</sequence>
<reference key="1">
    <citation type="journal article" date="1998" name="DNA Res.">
        <title>Complete sequence and gene organization of the genome of a hyper-thermophilic archaebacterium, Pyrococcus horikoshii OT3.</title>
        <authorList>
            <person name="Kawarabayasi Y."/>
            <person name="Sawada M."/>
            <person name="Horikawa H."/>
            <person name="Haikawa Y."/>
            <person name="Hino Y."/>
            <person name="Yamamoto S."/>
            <person name="Sekine M."/>
            <person name="Baba S."/>
            <person name="Kosugi H."/>
            <person name="Hosoyama A."/>
            <person name="Nagai Y."/>
            <person name="Sakai M."/>
            <person name="Ogura K."/>
            <person name="Otsuka R."/>
            <person name="Nakazawa H."/>
            <person name="Takamiya M."/>
            <person name="Ohfuku Y."/>
            <person name="Funahashi T."/>
            <person name="Tanaka T."/>
            <person name="Kudoh Y."/>
            <person name="Yamazaki J."/>
            <person name="Kushida N."/>
            <person name="Oguchi A."/>
            <person name="Aoki K."/>
            <person name="Yoshizawa T."/>
            <person name="Nakamura Y."/>
            <person name="Robb F.T."/>
            <person name="Horikoshi K."/>
            <person name="Masuchi Y."/>
            <person name="Shizuya H."/>
            <person name="Kikuchi H."/>
        </authorList>
    </citation>
    <scope>NUCLEOTIDE SEQUENCE [LARGE SCALE GENOMIC DNA]</scope>
    <source>
        <strain>ATCC 700860 / DSM 12428 / JCM 9974 / NBRC 100139 / OT-3</strain>
    </source>
</reference>
<name>PURE_PYRHO</name>
<organism>
    <name type="scientific">Pyrococcus horikoshii (strain ATCC 700860 / DSM 12428 / JCM 9974 / NBRC 100139 / OT-3)</name>
    <dbReference type="NCBI Taxonomy" id="70601"/>
    <lineage>
        <taxon>Archaea</taxon>
        <taxon>Methanobacteriati</taxon>
        <taxon>Methanobacteriota</taxon>
        <taxon>Thermococci</taxon>
        <taxon>Thermococcales</taxon>
        <taxon>Thermococcaceae</taxon>
        <taxon>Pyrococcus</taxon>
    </lineage>
</organism>
<proteinExistence type="inferred from homology"/>
<comment type="function">
    <text evidence="1">Catalyzes the conversion of N5-carboxyaminoimidazole ribonucleotide (N5-CAIR) to 4-carboxy-5-aminoimidazole ribonucleotide (CAIR).</text>
</comment>
<comment type="catalytic activity">
    <reaction evidence="1">
        <text>5-carboxyamino-1-(5-phospho-D-ribosyl)imidazole + H(+) = 5-amino-1-(5-phospho-D-ribosyl)imidazole-4-carboxylate</text>
        <dbReference type="Rhea" id="RHEA:13193"/>
        <dbReference type="ChEBI" id="CHEBI:15378"/>
        <dbReference type="ChEBI" id="CHEBI:58730"/>
        <dbReference type="ChEBI" id="CHEBI:77657"/>
        <dbReference type="EC" id="5.4.99.18"/>
    </reaction>
</comment>
<comment type="pathway">
    <text evidence="1">Purine metabolism; IMP biosynthesis via de novo pathway; 5-amino-1-(5-phospho-D-ribosyl)imidazole-4-carboxylate from 5-amino-1-(5-phospho-D-ribosyl)imidazole (N5-CAIR route): step 2/2.</text>
</comment>
<comment type="similarity">
    <text evidence="1">Belongs to the AIR carboxylase family. Class I subfamily.</text>
</comment>
<dbReference type="EC" id="5.4.99.18" evidence="1"/>
<dbReference type="EMBL" id="BA000001">
    <property type="protein sequence ID" value="BAA29394.1"/>
    <property type="molecule type" value="Genomic_DNA"/>
</dbReference>
<dbReference type="PIR" id="E71138">
    <property type="entry name" value="E71138"/>
</dbReference>
<dbReference type="SMR" id="O58058"/>
<dbReference type="STRING" id="70601.gene:9377239"/>
<dbReference type="EnsemblBacteria" id="BAA29394">
    <property type="protein sequence ID" value="BAA29394"/>
    <property type="gene ID" value="BAA29394"/>
</dbReference>
<dbReference type="KEGG" id="pho:PH0320"/>
<dbReference type="eggNOG" id="arCOG02464">
    <property type="taxonomic scope" value="Archaea"/>
</dbReference>
<dbReference type="UniPathway" id="UPA00074">
    <property type="reaction ID" value="UER00943"/>
</dbReference>
<dbReference type="Proteomes" id="UP000000752">
    <property type="component" value="Chromosome"/>
</dbReference>
<dbReference type="GO" id="GO:0034023">
    <property type="term" value="F:5-(carboxyamino)imidazole ribonucleotide mutase activity"/>
    <property type="evidence" value="ECO:0007669"/>
    <property type="project" value="UniProtKB-UniRule"/>
</dbReference>
<dbReference type="GO" id="GO:0006189">
    <property type="term" value="P:'de novo' IMP biosynthetic process"/>
    <property type="evidence" value="ECO:0007669"/>
    <property type="project" value="UniProtKB-UniRule"/>
</dbReference>
<dbReference type="FunFam" id="3.40.50.1970:FF:000013">
    <property type="entry name" value="Phosphoribosylaminoimidazole carboxylase"/>
    <property type="match status" value="1"/>
</dbReference>
<dbReference type="Gene3D" id="3.40.50.1970">
    <property type="match status" value="1"/>
</dbReference>
<dbReference type="HAMAP" id="MF_01929">
    <property type="entry name" value="PurE_classI"/>
    <property type="match status" value="1"/>
</dbReference>
<dbReference type="InterPro" id="IPR033747">
    <property type="entry name" value="PurE_ClassI"/>
</dbReference>
<dbReference type="InterPro" id="IPR000031">
    <property type="entry name" value="PurE_dom"/>
</dbReference>
<dbReference type="InterPro" id="IPR024694">
    <property type="entry name" value="PurE_prokaryotes"/>
</dbReference>
<dbReference type="NCBIfam" id="TIGR01162">
    <property type="entry name" value="purE"/>
    <property type="match status" value="1"/>
</dbReference>
<dbReference type="PANTHER" id="PTHR23046:SF2">
    <property type="entry name" value="PHOSPHORIBOSYLAMINOIMIDAZOLE CARBOXYLASE"/>
    <property type="match status" value="1"/>
</dbReference>
<dbReference type="PANTHER" id="PTHR23046">
    <property type="entry name" value="PHOSPHORIBOSYLAMINOIMIDAZOLE CARBOXYLASE CATALYTIC SUBUNIT"/>
    <property type="match status" value="1"/>
</dbReference>
<dbReference type="Pfam" id="PF00731">
    <property type="entry name" value="AIRC"/>
    <property type="match status" value="1"/>
</dbReference>
<dbReference type="PIRSF" id="PIRSF001338">
    <property type="entry name" value="AIR_carboxylase"/>
    <property type="match status" value="1"/>
</dbReference>
<dbReference type="SMART" id="SM01001">
    <property type="entry name" value="AIRC"/>
    <property type="match status" value="1"/>
</dbReference>
<dbReference type="SUPFAM" id="SSF52255">
    <property type="entry name" value="N5-CAIR mutase (phosphoribosylaminoimidazole carboxylase, PurE)"/>
    <property type="match status" value="1"/>
</dbReference>
<feature type="chain" id="PRO_0000074989" description="N5-carboxyaminoimidazole ribonucleotide mutase">
    <location>
        <begin position="1"/>
        <end position="177"/>
    </location>
</feature>
<feature type="binding site" evidence="1">
    <location>
        <position position="18"/>
    </location>
    <ligand>
        <name>substrate</name>
    </ligand>
</feature>
<feature type="binding site" evidence="1">
    <location>
        <position position="21"/>
    </location>
    <ligand>
        <name>substrate</name>
    </ligand>
</feature>
<feature type="binding site" evidence="1">
    <location>
        <position position="48"/>
    </location>
    <ligand>
        <name>substrate</name>
    </ligand>
</feature>